<name>TDH_PHOLL</name>
<gene>
    <name evidence="1" type="primary">tdh</name>
    <name type="ordered locus">plu4845</name>
</gene>
<feature type="chain" id="PRO_0000160847" description="L-threonine 3-dehydrogenase">
    <location>
        <begin position="1"/>
        <end position="341"/>
    </location>
</feature>
<feature type="active site" description="Charge relay system" evidence="1">
    <location>
        <position position="40"/>
    </location>
</feature>
<feature type="active site" description="Charge relay system" evidence="1">
    <location>
        <position position="43"/>
    </location>
</feature>
<feature type="binding site" evidence="1">
    <location>
        <position position="38"/>
    </location>
    <ligand>
        <name>Zn(2+)</name>
        <dbReference type="ChEBI" id="CHEBI:29105"/>
        <label>1</label>
        <note>catalytic</note>
    </ligand>
</feature>
<feature type="binding site" evidence="1">
    <location>
        <position position="63"/>
    </location>
    <ligand>
        <name>Zn(2+)</name>
        <dbReference type="ChEBI" id="CHEBI:29105"/>
        <label>1</label>
        <note>catalytic</note>
    </ligand>
</feature>
<feature type="binding site" evidence="1">
    <location>
        <position position="64"/>
    </location>
    <ligand>
        <name>Zn(2+)</name>
        <dbReference type="ChEBI" id="CHEBI:29105"/>
        <label>1</label>
        <note>catalytic</note>
    </ligand>
</feature>
<feature type="binding site" evidence="1">
    <location>
        <position position="93"/>
    </location>
    <ligand>
        <name>Zn(2+)</name>
        <dbReference type="ChEBI" id="CHEBI:29105"/>
        <label>2</label>
    </ligand>
</feature>
<feature type="binding site" evidence="1">
    <location>
        <position position="96"/>
    </location>
    <ligand>
        <name>Zn(2+)</name>
        <dbReference type="ChEBI" id="CHEBI:29105"/>
        <label>2</label>
    </ligand>
</feature>
<feature type="binding site" evidence="1">
    <location>
        <position position="99"/>
    </location>
    <ligand>
        <name>Zn(2+)</name>
        <dbReference type="ChEBI" id="CHEBI:29105"/>
        <label>2</label>
    </ligand>
</feature>
<feature type="binding site" evidence="1">
    <location>
        <position position="107"/>
    </location>
    <ligand>
        <name>Zn(2+)</name>
        <dbReference type="ChEBI" id="CHEBI:29105"/>
        <label>2</label>
    </ligand>
</feature>
<feature type="binding site" evidence="1">
    <location>
        <position position="175"/>
    </location>
    <ligand>
        <name>NAD(+)</name>
        <dbReference type="ChEBI" id="CHEBI:57540"/>
    </ligand>
</feature>
<feature type="binding site" evidence="1">
    <location>
        <position position="195"/>
    </location>
    <ligand>
        <name>NAD(+)</name>
        <dbReference type="ChEBI" id="CHEBI:57540"/>
    </ligand>
</feature>
<feature type="binding site" evidence="1">
    <location>
        <position position="200"/>
    </location>
    <ligand>
        <name>NAD(+)</name>
        <dbReference type="ChEBI" id="CHEBI:57540"/>
    </ligand>
</feature>
<feature type="binding site" evidence="1">
    <location>
        <begin position="262"/>
        <end position="264"/>
    </location>
    <ligand>
        <name>NAD(+)</name>
        <dbReference type="ChEBI" id="CHEBI:57540"/>
    </ligand>
</feature>
<feature type="binding site" evidence="1">
    <location>
        <begin position="286"/>
        <end position="287"/>
    </location>
    <ligand>
        <name>NAD(+)</name>
        <dbReference type="ChEBI" id="CHEBI:57540"/>
    </ligand>
</feature>
<feature type="site" description="Important for catalytic activity for the proton relay mechanism but does not participate directly in the coordination of zinc atom" evidence="1">
    <location>
        <position position="148"/>
    </location>
</feature>
<evidence type="ECO:0000255" key="1">
    <source>
        <dbReference type="HAMAP-Rule" id="MF_00627"/>
    </source>
</evidence>
<dbReference type="EC" id="1.1.1.103" evidence="1"/>
<dbReference type="EMBL" id="BX571875">
    <property type="protein sequence ID" value="CAE17217.1"/>
    <property type="molecule type" value="Genomic_DNA"/>
</dbReference>
<dbReference type="RefSeq" id="WP_011148903.1">
    <property type="nucleotide sequence ID" value="NC_005126.1"/>
</dbReference>
<dbReference type="SMR" id="Q7MY48"/>
<dbReference type="STRING" id="243265.plu4845"/>
<dbReference type="GeneID" id="48851073"/>
<dbReference type="KEGG" id="plu:plu4845"/>
<dbReference type="eggNOG" id="COG1063">
    <property type="taxonomic scope" value="Bacteria"/>
</dbReference>
<dbReference type="HOGENOM" id="CLU_026673_11_0_6"/>
<dbReference type="OrthoDB" id="9773078at2"/>
<dbReference type="UniPathway" id="UPA00046">
    <property type="reaction ID" value="UER00505"/>
</dbReference>
<dbReference type="Proteomes" id="UP000002514">
    <property type="component" value="Chromosome"/>
</dbReference>
<dbReference type="GO" id="GO:0005737">
    <property type="term" value="C:cytoplasm"/>
    <property type="evidence" value="ECO:0007669"/>
    <property type="project" value="UniProtKB-SubCell"/>
</dbReference>
<dbReference type="GO" id="GO:0008743">
    <property type="term" value="F:L-threonine 3-dehydrogenase activity"/>
    <property type="evidence" value="ECO:0007669"/>
    <property type="project" value="UniProtKB-UniRule"/>
</dbReference>
<dbReference type="GO" id="GO:0008270">
    <property type="term" value="F:zinc ion binding"/>
    <property type="evidence" value="ECO:0007669"/>
    <property type="project" value="UniProtKB-UniRule"/>
</dbReference>
<dbReference type="GO" id="GO:0019518">
    <property type="term" value="P:L-threonine catabolic process to glycine"/>
    <property type="evidence" value="ECO:0007669"/>
    <property type="project" value="UniProtKB-UniPathway"/>
</dbReference>
<dbReference type="FunFam" id="3.40.50.720:FF:000059">
    <property type="entry name" value="L-threonine 3-dehydrogenase"/>
    <property type="match status" value="1"/>
</dbReference>
<dbReference type="Gene3D" id="3.90.180.10">
    <property type="entry name" value="Medium-chain alcohol dehydrogenases, catalytic domain"/>
    <property type="match status" value="1"/>
</dbReference>
<dbReference type="Gene3D" id="3.40.50.720">
    <property type="entry name" value="NAD(P)-binding Rossmann-like Domain"/>
    <property type="match status" value="1"/>
</dbReference>
<dbReference type="HAMAP" id="MF_00627">
    <property type="entry name" value="Thr_dehydrog"/>
    <property type="match status" value="1"/>
</dbReference>
<dbReference type="InterPro" id="IPR013149">
    <property type="entry name" value="ADH-like_C"/>
</dbReference>
<dbReference type="InterPro" id="IPR013154">
    <property type="entry name" value="ADH-like_N"/>
</dbReference>
<dbReference type="InterPro" id="IPR002328">
    <property type="entry name" value="ADH_Zn_CS"/>
</dbReference>
<dbReference type="InterPro" id="IPR011032">
    <property type="entry name" value="GroES-like_sf"/>
</dbReference>
<dbReference type="InterPro" id="IPR004627">
    <property type="entry name" value="L-Threonine_3-DHase"/>
</dbReference>
<dbReference type="InterPro" id="IPR036291">
    <property type="entry name" value="NAD(P)-bd_dom_sf"/>
</dbReference>
<dbReference type="InterPro" id="IPR020843">
    <property type="entry name" value="PKS_ER"/>
</dbReference>
<dbReference type="InterPro" id="IPR050129">
    <property type="entry name" value="Zn_alcohol_dh"/>
</dbReference>
<dbReference type="NCBIfam" id="NF003808">
    <property type="entry name" value="PRK05396.1"/>
    <property type="match status" value="1"/>
</dbReference>
<dbReference type="NCBIfam" id="TIGR00692">
    <property type="entry name" value="tdh"/>
    <property type="match status" value="1"/>
</dbReference>
<dbReference type="PANTHER" id="PTHR43401">
    <property type="entry name" value="L-THREONINE 3-DEHYDROGENASE"/>
    <property type="match status" value="1"/>
</dbReference>
<dbReference type="PANTHER" id="PTHR43401:SF2">
    <property type="entry name" value="L-THREONINE 3-DEHYDROGENASE"/>
    <property type="match status" value="1"/>
</dbReference>
<dbReference type="Pfam" id="PF08240">
    <property type="entry name" value="ADH_N"/>
    <property type="match status" value="1"/>
</dbReference>
<dbReference type="Pfam" id="PF00107">
    <property type="entry name" value="ADH_zinc_N"/>
    <property type="match status" value="1"/>
</dbReference>
<dbReference type="SMART" id="SM00829">
    <property type="entry name" value="PKS_ER"/>
    <property type="match status" value="1"/>
</dbReference>
<dbReference type="SUPFAM" id="SSF50129">
    <property type="entry name" value="GroES-like"/>
    <property type="match status" value="1"/>
</dbReference>
<dbReference type="SUPFAM" id="SSF51735">
    <property type="entry name" value="NAD(P)-binding Rossmann-fold domains"/>
    <property type="match status" value="1"/>
</dbReference>
<dbReference type="PROSITE" id="PS00059">
    <property type="entry name" value="ADH_ZINC"/>
    <property type="match status" value="1"/>
</dbReference>
<organism>
    <name type="scientific">Photorhabdus laumondii subsp. laumondii (strain DSM 15139 / CIP 105565 / TT01)</name>
    <name type="common">Photorhabdus luminescens subsp. laumondii</name>
    <dbReference type="NCBI Taxonomy" id="243265"/>
    <lineage>
        <taxon>Bacteria</taxon>
        <taxon>Pseudomonadati</taxon>
        <taxon>Pseudomonadota</taxon>
        <taxon>Gammaproteobacteria</taxon>
        <taxon>Enterobacterales</taxon>
        <taxon>Morganellaceae</taxon>
        <taxon>Photorhabdus</taxon>
    </lineage>
</organism>
<sequence>MKALSKLKAEEGIWMIDVPEPELGHNDVMIKIRKTAICGTDVHIYNWDDWSQKTIPVPMVVGHEYVGEVVAIGQEVKGFKIGDRVSGEGHITCGYCRNCRGGRTHLCRNTIGVGVNRAGCFAQYLVIPAFNAFKIPDNISDELAAIFDPFGNAVHTALSFDLVGEDVLVSGAGPIGIMAAAVCKHVGARHVVITDVNEYRLELARKMGVTRAVNVSQENLTDVMAELGMTEGFDVGLEMSGAPAAFRTLLNTMNHGGRVALLGIPPSDMAIDWNQVIFKGLFIKGIYGREMFETWYKMATLIQSGLDLTPIITHRFSIDDFQKGFDIMRSGQSGKVILNWD</sequence>
<comment type="function">
    <text evidence="1">Catalyzes the NAD(+)-dependent oxidation of L-threonine to 2-amino-3-ketobutyrate.</text>
</comment>
<comment type="catalytic activity">
    <reaction evidence="1">
        <text>L-threonine + NAD(+) = (2S)-2-amino-3-oxobutanoate + NADH + H(+)</text>
        <dbReference type="Rhea" id="RHEA:13161"/>
        <dbReference type="ChEBI" id="CHEBI:15378"/>
        <dbReference type="ChEBI" id="CHEBI:57540"/>
        <dbReference type="ChEBI" id="CHEBI:57926"/>
        <dbReference type="ChEBI" id="CHEBI:57945"/>
        <dbReference type="ChEBI" id="CHEBI:78948"/>
        <dbReference type="EC" id="1.1.1.103"/>
    </reaction>
</comment>
<comment type="cofactor">
    <cofactor evidence="1">
        <name>Zn(2+)</name>
        <dbReference type="ChEBI" id="CHEBI:29105"/>
    </cofactor>
    <text evidence="1">Binds 2 Zn(2+) ions per subunit.</text>
</comment>
<comment type="pathway">
    <text evidence="1">Amino-acid degradation; L-threonine degradation via oxydo-reductase pathway; glycine from L-threonine: step 1/2.</text>
</comment>
<comment type="subunit">
    <text evidence="1">Homotetramer.</text>
</comment>
<comment type="subcellular location">
    <subcellularLocation>
        <location evidence="1">Cytoplasm</location>
    </subcellularLocation>
</comment>
<comment type="similarity">
    <text evidence="1">Belongs to the zinc-containing alcohol dehydrogenase family.</text>
</comment>
<reference key="1">
    <citation type="journal article" date="2003" name="Nat. Biotechnol.">
        <title>The genome sequence of the entomopathogenic bacterium Photorhabdus luminescens.</title>
        <authorList>
            <person name="Duchaud E."/>
            <person name="Rusniok C."/>
            <person name="Frangeul L."/>
            <person name="Buchrieser C."/>
            <person name="Givaudan A."/>
            <person name="Taourit S."/>
            <person name="Bocs S."/>
            <person name="Boursaux-Eude C."/>
            <person name="Chandler M."/>
            <person name="Charles J.-F."/>
            <person name="Dassa E."/>
            <person name="Derose R."/>
            <person name="Derzelle S."/>
            <person name="Freyssinet G."/>
            <person name="Gaudriault S."/>
            <person name="Medigue C."/>
            <person name="Lanois A."/>
            <person name="Powell K."/>
            <person name="Siguier P."/>
            <person name="Vincent R."/>
            <person name="Wingate V."/>
            <person name="Zouine M."/>
            <person name="Glaser P."/>
            <person name="Boemare N."/>
            <person name="Danchin A."/>
            <person name="Kunst F."/>
        </authorList>
    </citation>
    <scope>NUCLEOTIDE SEQUENCE [LARGE SCALE GENOMIC DNA]</scope>
    <source>
        <strain>DSM 15139 / CIP 105565 / TT01</strain>
    </source>
</reference>
<accession>Q7MY48</accession>
<proteinExistence type="inferred from homology"/>
<protein>
    <recommendedName>
        <fullName evidence="1">L-threonine 3-dehydrogenase</fullName>
        <shortName evidence="1">TDH</shortName>
        <ecNumber evidence="1">1.1.1.103</ecNumber>
    </recommendedName>
</protein>
<keyword id="KW-0963">Cytoplasm</keyword>
<keyword id="KW-0479">Metal-binding</keyword>
<keyword id="KW-0520">NAD</keyword>
<keyword id="KW-0560">Oxidoreductase</keyword>
<keyword id="KW-1185">Reference proteome</keyword>
<keyword id="KW-0862">Zinc</keyword>